<keyword id="KW-0067">ATP-binding</keyword>
<keyword id="KW-0997">Cell inner membrane</keyword>
<keyword id="KW-1003">Cell membrane</keyword>
<keyword id="KW-0963">Cytoplasm</keyword>
<keyword id="KW-0472">Membrane</keyword>
<keyword id="KW-0479">Metal-binding</keyword>
<keyword id="KW-0547">Nucleotide-binding</keyword>
<keyword id="KW-0653">Protein transport</keyword>
<keyword id="KW-1185">Reference proteome</keyword>
<keyword id="KW-1278">Translocase</keyword>
<keyword id="KW-0811">Translocation</keyword>
<keyword id="KW-0813">Transport</keyword>
<keyword id="KW-0862">Zinc</keyword>
<name>SECA_CHLTE</name>
<evidence type="ECO:0000255" key="1">
    <source>
        <dbReference type="HAMAP-Rule" id="MF_01382"/>
    </source>
</evidence>
<organism>
    <name type="scientific">Chlorobaculum tepidum (strain ATCC 49652 / DSM 12025 / NBRC 103806 / TLS)</name>
    <name type="common">Chlorobium tepidum</name>
    <dbReference type="NCBI Taxonomy" id="194439"/>
    <lineage>
        <taxon>Bacteria</taxon>
        <taxon>Pseudomonadati</taxon>
        <taxon>Chlorobiota</taxon>
        <taxon>Chlorobiia</taxon>
        <taxon>Chlorobiales</taxon>
        <taxon>Chlorobiaceae</taxon>
        <taxon>Chlorobaculum</taxon>
    </lineage>
</organism>
<dbReference type="EC" id="7.4.2.8" evidence="1"/>
<dbReference type="EMBL" id="AE006470">
    <property type="protein sequence ID" value="AAM72469.1"/>
    <property type="molecule type" value="Genomic_DNA"/>
</dbReference>
<dbReference type="RefSeq" id="NP_662127.1">
    <property type="nucleotide sequence ID" value="NC_002932.3"/>
</dbReference>
<dbReference type="RefSeq" id="WP_010932908.1">
    <property type="nucleotide sequence ID" value="NC_002932.3"/>
</dbReference>
<dbReference type="SMR" id="Q8KD18"/>
<dbReference type="STRING" id="194439.CT1239"/>
<dbReference type="EnsemblBacteria" id="AAM72469">
    <property type="protein sequence ID" value="AAM72469"/>
    <property type="gene ID" value="CT1239"/>
</dbReference>
<dbReference type="KEGG" id="cte:CT1239"/>
<dbReference type="PATRIC" id="fig|194439.7.peg.1130"/>
<dbReference type="eggNOG" id="COG0653">
    <property type="taxonomic scope" value="Bacteria"/>
</dbReference>
<dbReference type="HOGENOM" id="CLU_005314_0_0_10"/>
<dbReference type="OrthoDB" id="9805579at2"/>
<dbReference type="Proteomes" id="UP000001007">
    <property type="component" value="Chromosome"/>
</dbReference>
<dbReference type="GO" id="GO:0031522">
    <property type="term" value="C:cell envelope Sec protein transport complex"/>
    <property type="evidence" value="ECO:0007669"/>
    <property type="project" value="TreeGrafter"/>
</dbReference>
<dbReference type="GO" id="GO:0005829">
    <property type="term" value="C:cytosol"/>
    <property type="evidence" value="ECO:0007669"/>
    <property type="project" value="TreeGrafter"/>
</dbReference>
<dbReference type="GO" id="GO:0005886">
    <property type="term" value="C:plasma membrane"/>
    <property type="evidence" value="ECO:0007669"/>
    <property type="project" value="UniProtKB-SubCell"/>
</dbReference>
<dbReference type="GO" id="GO:0005524">
    <property type="term" value="F:ATP binding"/>
    <property type="evidence" value="ECO:0007669"/>
    <property type="project" value="UniProtKB-UniRule"/>
</dbReference>
<dbReference type="GO" id="GO:0046872">
    <property type="term" value="F:metal ion binding"/>
    <property type="evidence" value="ECO:0007669"/>
    <property type="project" value="UniProtKB-KW"/>
</dbReference>
<dbReference type="GO" id="GO:0008564">
    <property type="term" value="F:protein-exporting ATPase activity"/>
    <property type="evidence" value="ECO:0007669"/>
    <property type="project" value="UniProtKB-EC"/>
</dbReference>
<dbReference type="GO" id="GO:0065002">
    <property type="term" value="P:intracellular protein transmembrane transport"/>
    <property type="evidence" value="ECO:0007669"/>
    <property type="project" value="UniProtKB-UniRule"/>
</dbReference>
<dbReference type="GO" id="GO:0017038">
    <property type="term" value="P:protein import"/>
    <property type="evidence" value="ECO:0007669"/>
    <property type="project" value="InterPro"/>
</dbReference>
<dbReference type="GO" id="GO:0006605">
    <property type="term" value="P:protein targeting"/>
    <property type="evidence" value="ECO:0007669"/>
    <property type="project" value="UniProtKB-UniRule"/>
</dbReference>
<dbReference type="GO" id="GO:0043952">
    <property type="term" value="P:protein transport by the Sec complex"/>
    <property type="evidence" value="ECO:0007669"/>
    <property type="project" value="TreeGrafter"/>
</dbReference>
<dbReference type="CDD" id="cd17928">
    <property type="entry name" value="DEXDc_SecA"/>
    <property type="match status" value="1"/>
</dbReference>
<dbReference type="CDD" id="cd18803">
    <property type="entry name" value="SF2_C_secA"/>
    <property type="match status" value="1"/>
</dbReference>
<dbReference type="FunFam" id="3.40.50.300:FF:000246">
    <property type="entry name" value="Preprotein translocase subunit SecA"/>
    <property type="match status" value="1"/>
</dbReference>
<dbReference type="FunFam" id="3.40.50.300:FF:000694">
    <property type="entry name" value="Preprotein translocase subunit SecA"/>
    <property type="match status" value="1"/>
</dbReference>
<dbReference type="Gene3D" id="1.10.3060.10">
    <property type="entry name" value="Helical scaffold and wing domains of SecA"/>
    <property type="match status" value="1"/>
</dbReference>
<dbReference type="Gene3D" id="3.40.50.300">
    <property type="entry name" value="P-loop containing nucleotide triphosphate hydrolases"/>
    <property type="match status" value="4"/>
</dbReference>
<dbReference type="Gene3D" id="3.90.1440.10">
    <property type="entry name" value="SecA, preprotein cross-linking domain"/>
    <property type="match status" value="1"/>
</dbReference>
<dbReference type="HAMAP" id="MF_01382">
    <property type="entry name" value="SecA"/>
    <property type="match status" value="1"/>
</dbReference>
<dbReference type="InterPro" id="IPR014001">
    <property type="entry name" value="Helicase_ATP-bd"/>
</dbReference>
<dbReference type="InterPro" id="IPR001650">
    <property type="entry name" value="Helicase_C-like"/>
</dbReference>
<dbReference type="InterPro" id="IPR027417">
    <property type="entry name" value="P-loop_NTPase"/>
</dbReference>
<dbReference type="InterPro" id="IPR004027">
    <property type="entry name" value="SEC_C_motif"/>
</dbReference>
<dbReference type="InterPro" id="IPR000185">
    <property type="entry name" value="SecA"/>
</dbReference>
<dbReference type="InterPro" id="IPR020937">
    <property type="entry name" value="SecA_CS"/>
</dbReference>
<dbReference type="InterPro" id="IPR011115">
    <property type="entry name" value="SecA_DEAD"/>
</dbReference>
<dbReference type="InterPro" id="IPR014018">
    <property type="entry name" value="SecA_motor_DEAD"/>
</dbReference>
<dbReference type="InterPro" id="IPR011130">
    <property type="entry name" value="SecA_preprotein_X-link_dom"/>
</dbReference>
<dbReference type="InterPro" id="IPR044722">
    <property type="entry name" value="SecA_SF2_C"/>
</dbReference>
<dbReference type="InterPro" id="IPR011116">
    <property type="entry name" value="SecA_Wing/Scaffold"/>
</dbReference>
<dbReference type="InterPro" id="IPR036266">
    <property type="entry name" value="SecA_Wing/Scaffold_sf"/>
</dbReference>
<dbReference type="InterPro" id="IPR036670">
    <property type="entry name" value="SecA_X-link_sf"/>
</dbReference>
<dbReference type="NCBIfam" id="TIGR00963">
    <property type="entry name" value="secA"/>
    <property type="match status" value="1"/>
</dbReference>
<dbReference type="PANTHER" id="PTHR30612:SF0">
    <property type="entry name" value="CHLOROPLAST PROTEIN-TRANSPORTING ATPASE"/>
    <property type="match status" value="1"/>
</dbReference>
<dbReference type="PANTHER" id="PTHR30612">
    <property type="entry name" value="SECA INNER MEMBRANE COMPONENT OF SEC PROTEIN SECRETION SYSTEM"/>
    <property type="match status" value="1"/>
</dbReference>
<dbReference type="Pfam" id="PF21090">
    <property type="entry name" value="P-loop_SecA"/>
    <property type="match status" value="2"/>
</dbReference>
<dbReference type="Pfam" id="PF02810">
    <property type="entry name" value="SEC-C"/>
    <property type="match status" value="1"/>
</dbReference>
<dbReference type="Pfam" id="PF07517">
    <property type="entry name" value="SecA_DEAD"/>
    <property type="match status" value="1"/>
</dbReference>
<dbReference type="Pfam" id="PF01043">
    <property type="entry name" value="SecA_PP_bind"/>
    <property type="match status" value="1"/>
</dbReference>
<dbReference type="Pfam" id="PF07516">
    <property type="entry name" value="SecA_SW"/>
    <property type="match status" value="1"/>
</dbReference>
<dbReference type="PRINTS" id="PR00906">
    <property type="entry name" value="SECA"/>
</dbReference>
<dbReference type="SMART" id="SM00957">
    <property type="entry name" value="SecA_DEAD"/>
    <property type="match status" value="1"/>
</dbReference>
<dbReference type="SMART" id="SM00958">
    <property type="entry name" value="SecA_PP_bind"/>
    <property type="match status" value="1"/>
</dbReference>
<dbReference type="SUPFAM" id="SSF81886">
    <property type="entry name" value="Helical scaffold and wing domains of SecA"/>
    <property type="match status" value="1"/>
</dbReference>
<dbReference type="SUPFAM" id="SSF52540">
    <property type="entry name" value="P-loop containing nucleoside triphosphate hydrolases"/>
    <property type="match status" value="2"/>
</dbReference>
<dbReference type="SUPFAM" id="SSF81767">
    <property type="entry name" value="Pre-protein crosslinking domain of SecA"/>
    <property type="match status" value="1"/>
</dbReference>
<dbReference type="PROSITE" id="PS01312">
    <property type="entry name" value="SECA"/>
    <property type="match status" value="1"/>
</dbReference>
<dbReference type="PROSITE" id="PS51196">
    <property type="entry name" value="SECA_MOTOR_DEAD"/>
    <property type="match status" value="1"/>
</dbReference>
<accession>Q8KD18</accession>
<gene>
    <name evidence="1" type="primary">secA</name>
    <name type="ordered locus">CT1239</name>
</gene>
<comment type="function">
    <text evidence="1">Part of the Sec protein translocase complex. Interacts with the SecYEG preprotein conducting channel. Has a central role in coupling the hydrolysis of ATP to the transfer of proteins into and across the cell membrane, serving as an ATP-driven molecular motor driving the stepwise translocation of polypeptide chains across the membrane.</text>
</comment>
<comment type="catalytic activity">
    <reaction evidence="1">
        <text>ATP + H2O + cellular proteinSide 1 = ADP + phosphate + cellular proteinSide 2.</text>
        <dbReference type="EC" id="7.4.2.8"/>
    </reaction>
</comment>
<comment type="cofactor">
    <cofactor evidence="1">
        <name>Zn(2+)</name>
        <dbReference type="ChEBI" id="CHEBI:29105"/>
    </cofactor>
    <text evidence="1">May bind 1 zinc ion per subunit.</text>
</comment>
<comment type="subunit">
    <text evidence="1">Monomer and homodimer. Part of the essential Sec protein translocation apparatus which comprises SecA, SecYEG and auxiliary proteins SecDF. Other proteins may also be involved.</text>
</comment>
<comment type="subcellular location">
    <subcellularLocation>
        <location evidence="1">Cell inner membrane</location>
        <topology evidence="1">Peripheral membrane protein</topology>
        <orientation evidence="1">Cytoplasmic side</orientation>
    </subcellularLocation>
    <subcellularLocation>
        <location evidence="1">Cytoplasm</location>
    </subcellularLocation>
    <text evidence="1">Distribution is 50-50.</text>
</comment>
<comment type="similarity">
    <text evidence="1">Belongs to the SecA family.</text>
</comment>
<protein>
    <recommendedName>
        <fullName evidence="1">Protein translocase subunit SecA</fullName>
        <ecNumber evidence="1">7.4.2.8</ecNumber>
    </recommendedName>
</protein>
<proteinExistence type="inferred from homology"/>
<sequence length="1031" mass="118004">MLKIIAKIFGSKHEKDIKKIQPIVDRINEIYGTLNALPDEAFRNKGVELRKKVRDKLIPFETKIKETEHKLERPDMSHEEHEKLNIELEQLRNKYEEATAAILDEVLPETFALVKETCRRLKGHTYTVMGHEMVWDMVPYDVQLIGGIVLHQGKIAEMATGEGKTLVSTLPVFLNALTGRGVHVVTVNEYLAQRDMEWMRPVYEYHGLSTGVILAGLYSNQRRNAYLCDITWGTNSEFGFDYLRDNMAGSEEEMVQRDFYFAIVDEVDSVLIDEARTPLIISGPVPNSDTDTKYREIKPWIEQLVRAQQNLVATLLDQAEKTLKEKPNDFDAGLALLRVKRGQPKNKRFIKMLSQPGIGKLVQSVENEYLKDNSSRMHEVDDELFYAVDEKANTIDLTEKGREFLGKLSHQDQDLFLLPDVGSEIAAIEADKNLQPTDKIRKKDEVYRLYSERSDSLHTIGQLLKAYTLFAKDDEYVVQNGQVMIVDEFTGRVLAGRRYSDGLHQAIEAKENVKIEGETQTMATITIQNYFRLYSKLAGMTGTAETEASEFFEIYKLDVVVIPTNHPIARHDQDDLVYKTRREKYNAIVNKVQELNAKGQPVLVGTASVEVSETLSRMLRAKRIQHNVLNAKQHAREAEIVAMAGQKGAVTIATNMAGRGTDIKLGPGVREMGGLFILGSERHESRRIDRQLRGRAGRQGDPGESIFYVSLEDDLMRLFGSDRVIAVMDKLGHEEGDVIEHSMITKSIERAQKKVEEQNFAIRKRLLEYDDVMNQQREVIYTRRRKALKMGRLKNDIMDLLQDYCYTVAKKFHESNDPAGLEEQVLRELSVEFHVEASAFEREPFEQTAEALYKAASEFYHRKENSLPDEIMQQIEKYAVLSVIDQKWREHLREIDSLREGINLRAYGQKDPLLEYKQEAYKLFVELLREIEHETLSVAFRLFPVSQDESEEIEARQRRQAVRQERLVAQHAEAESTYKIAADGGMNATLWMPGDEIVVQQPVRTEKKPGRNDDCPCGSGKKYKNCCGANE</sequence>
<reference key="1">
    <citation type="journal article" date="2002" name="Proc. Natl. Acad. Sci. U.S.A.">
        <title>The complete genome sequence of Chlorobium tepidum TLS, a photosynthetic, anaerobic, green-sulfur bacterium.</title>
        <authorList>
            <person name="Eisen J.A."/>
            <person name="Nelson K.E."/>
            <person name="Paulsen I.T."/>
            <person name="Heidelberg J.F."/>
            <person name="Wu M."/>
            <person name="Dodson R.J."/>
            <person name="DeBoy R.T."/>
            <person name="Gwinn M.L."/>
            <person name="Nelson W.C."/>
            <person name="Haft D.H."/>
            <person name="Hickey E.K."/>
            <person name="Peterson J.D."/>
            <person name="Durkin A.S."/>
            <person name="Kolonay J.F."/>
            <person name="Yang F."/>
            <person name="Holt I.E."/>
            <person name="Umayam L.A."/>
            <person name="Mason T.M."/>
            <person name="Brenner M."/>
            <person name="Shea T.P."/>
            <person name="Parksey D.S."/>
            <person name="Nierman W.C."/>
            <person name="Feldblyum T.V."/>
            <person name="Hansen C.L."/>
            <person name="Craven M.B."/>
            <person name="Radune D."/>
            <person name="Vamathevan J.J."/>
            <person name="Khouri H.M."/>
            <person name="White O."/>
            <person name="Gruber T.M."/>
            <person name="Ketchum K.A."/>
            <person name="Venter J.C."/>
            <person name="Tettelin H."/>
            <person name="Bryant D.A."/>
            <person name="Fraser C.M."/>
        </authorList>
    </citation>
    <scope>NUCLEOTIDE SEQUENCE [LARGE SCALE GENOMIC DNA]</scope>
    <source>
        <strain>ATCC 49652 / DSM 12025 / NBRC 103806 / TLS</strain>
    </source>
</reference>
<feature type="chain" id="PRO_0000320772" description="Protein translocase subunit SecA">
    <location>
        <begin position="1"/>
        <end position="1031"/>
    </location>
</feature>
<feature type="binding site" evidence="1">
    <location>
        <position position="143"/>
    </location>
    <ligand>
        <name>ATP</name>
        <dbReference type="ChEBI" id="CHEBI:30616"/>
    </ligand>
</feature>
<feature type="binding site" evidence="1">
    <location>
        <begin position="161"/>
        <end position="165"/>
    </location>
    <ligand>
        <name>ATP</name>
        <dbReference type="ChEBI" id="CHEBI:30616"/>
    </ligand>
</feature>
<feature type="binding site" evidence="1">
    <location>
        <position position="662"/>
    </location>
    <ligand>
        <name>ATP</name>
        <dbReference type="ChEBI" id="CHEBI:30616"/>
    </ligand>
</feature>
<feature type="binding site" evidence="1">
    <location>
        <position position="1015"/>
    </location>
    <ligand>
        <name>Zn(2+)</name>
        <dbReference type="ChEBI" id="CHEBI:29105"/>
    </ligand>
</feature>
<feature type="binding site" evidence="1">
    <location>
        <position position="1017"/>
    </location>
    <ligand>
        <name>Zn(2+)</name>
        <dbReference type="ChEBI" id="CHEBI:29105"/>
    </ligand>
</feature>
<feature type="binding site" evidence="1">
    <location>
        <position position="1026"/>
    </location>
    <ligand>
        <name>Zn(2+)</name>
        <dbReference type="ChEBI" id="CHEBI:29105"/>
    </ligand>
</feature>
<feature type="binding site" evidence="1">
    <location>
        <position position="1027"/>
    </location>
    <ligand>
        <name>Zn(2+)</name>
        <dbReference type="ChEBI" id="CHEBI:29105"/>
    </ligand>
</feature>